<sequence>MRFDILTLFPAMFTGPLTESILKRAAQAELLQFHLHDIRDYATDKHKMVDDSPTGGGAGMVMKPGPLALCTQTVLSADPNPAPVVLMTPSGRVFNQTIAREWAQLPRLVLVCGHYEGIDERYIERYVTDQVSLGDFVLTGGELAAMTIVDAVGRLVPEVLDPESLLHESHDDGLLEYPHYTKPAEWNGVAVPPILLSGHHAKIAQWRHEQRLRRTLERRPDMLRHATLSKKDRQLLKEWGWEEKSEGKNQKAEG</sequence>
<comment type="function">
    <text evidence="1">Specifically methylates guanosine-37 in various tRNAs.</text>
</comment>
<comment type="catalytic activity">
    <reaction evidence="1">
        <text>guanosine(37) in tRNA + S-adenosyl-L-methionine = N(1)-methylguanosine(37) in tRNA + S-adenosyl-L-homocysteine + H(+)</text>
        <dbReference type="Rhea" id="RHEA:36899"/>
        <dbReference type="Rhea" id="RHEA-COMP:10145"/>
        <dbReference type="Rhea" id="RHEA-COMP:10147"/>
        <dbReference type="ChEBI" id="CHEBI:15378"/>
        <dbReference type="ChEBI" id="CHEBI:57856"/>
        <dbReference type="ChEBI" id="CHEBI:59789"/>
        <dbReference type="ChEBI" id="CHEBI:73542"/>
        <dbReference type="ChEBI" id="CHEBI:74269"/>
        <dbReference type="EC" id="2.1.1.228"/>
    </reaction>
</comment>
<comment type="subunit">
    <text evidence="1">Homodimer.</text>
</comment>
<comment type="subcellular location">
    <subcellularLocation>
        <location evidence="1">Cytoplasm</location>
    </subcellularLocation>
</comment>
<comment type="similarity">
    <text evidence="1">Belongs to the RNA methyltransferase TrmD family.</text>
</comment>
<keyword id="KW-0963">Cytoplasm</keyword>
<keyword id="KW-0489">Methyltransferase</keyword>
<keyword id="KW-0949">S-adenosyl-L-methionine</keyword>
<keyword id="KW-0808">Transferase</keyword>
<keyword id="KW-0819">tRNA processing</keyword>
<feature type="chain" id="PRO_1000130179" description="tRNA (guanine-N(1)-)-methyltransferase">
    <location>
        <begin position="1"/>
        <end position="254"/>
    </location>
</feature>
<feature type="binding site" evidence="1">
    <location>
        <position position="113"/>
    </location>
    <ligand>
        <name>S-adenosyl-L-methionine</name>
        <dbReference type="ChEBI" id="CHEBI:59789"/>
    </ligand>
</feature>
<feature type="binding site" evidence="1">
    <location>
        <begin position="133"/>
        <end position="138"/>
    </location>
    <ligand>
        <name>S-adenosyl-L-methionine</name>
        <dbReference type="ChEBI" id="CHEBI:59789"/>
    </ligand>
</feature>
<reference key="1">
    <citation type="journal article" date="2011" name="Stand. Genomic Sci.">
        <title>Complete genome sequence of the filamentous gliding predatory bacterium Herpetosiphon aurantiacus type strain (114-95(T)).</title>
        <authorList>
            <person name="Kiss H."/>
            <person name="Nett M."/>
            <person name="Domin N."/>
            <person name="Martin K."/>
            <person name="Maresca J.A."/>
            <person name="Copeland A."/>
            <person name="Lapidus A."/>
            <person name="Lucas S."/>
            <person name="Berry K.W."/>
            <person name="Glavina Del Rio T."/>
            <person name="Dalin E."/>
            <person name="Tice H."/>
            <person name="Pitluck S."/>
            <person name="Richardson P."/>
            <person name="Bruce D."/>
            <person name="Goodwin L."/>
            <person name="Han C."/>
            <person name="Detter J.C."/>
            <person name="Schmutz J."/>
            <person name="Brettin T."/>
            <person name="Land M."/>
            <person name="Hauser L."/>
            <person name="Kyrpides N.C."/>
            <person name="Ivanova N."/>
            <person name="Goeker M."/>
            <person name="Woyke T."/>
            <person name="Klenk H.P."/>
            <person name="Bryant D.A."/>
        </authorList>
    </citation>
    <scope>NUCLEOTIDE SEQUENCE [LARGE SCALE GENOMIC DNA]</scope>
    <source>
        <strain>ATCC 23779 / DSM 785 / 114-95</strain>
    </source>
</reference>
<evidence type="ECO:0000255" key="1">
    <source>
        <dbReference type="HAMAP-Rule" id="MF_00605"/>
    </source>
</evidence>
<accession>A9B3P8</accession>
<protein>
    <recommendedName>
        <fullName evidence="1">tRNA (guanine-N(1)-)-methyltransferase</fullName>
        <ecNumber evidence="1">2.1.1.228</ecNumber>
    </recommendedName>
    <alternativeName>
        <fullName evidence="1">M1G-methyltransferase</fullName>
    </alternativeName>
    <alternativeName>
        <fullName evidence="1">tRNA [GM37] methyltransferase</fullName>
    </alternativeName>
</protein>
<proteinExistence type="inferred from homology"/>
<dbReference type="EC" id="2.1.1.228" evidence="1"/>
<dbReference type="EMBL" id="CP000875">
    <property type="protein sequence ID" value="ABX05620.1"/>
    <property type="molecule type" value="Genomic_DNA"/>
</dbReference>
<dbReference type="SMR" id="A9B3P8"/>
<dbReference type="FunCoup" id="A9B3P8">
    <property type="interactions" value="408"/>
</dbReference>
<dbReference type="STRING" id="316274.Haur_2982"/>
<dbReference type="KEGG" id="hau:Haur_2982"/>
<dbReference type="eggNOG" id="COG0336">
    <property type="taxonomic scope" value="Bacteria"/>
</dbReference>
<dbReference type="HOGENOM" id="CLU_047363_0_1_0"/>
<dbReference type="InParanoid" id="A9B3P8"/>
<dbReference type="Proteomes" id="UP000000787">
    <property type="component" value="Chromosome"/>
</dbReference>
<dbReference type="GO" id="GO:0005829">
    <property type="term" value="C:cytosol"/>
    <property type="evidence" value="ECO:0007669"/>
    <property type="project" value="TreeGrafter"/>
</dbReference>
<dbReference type="GO" id="GO:0052906">
    <property type="term" value="F:tRNA (guanine(37)-N1)-methyltransferase activity"/>
    <property type="evidence" value="ECO:0007669"/>
    <property type="project" value="UniProtKB-UniRule"/>
</dbReference>
<dbReference type="GO" id="GO:0002939">
    <property type="term" value="P:tRNA N1-guanine methylation"/>
    <property type="evidence" value="ECO:0007669"/>
    <property type="project" value="TreeGrafter"/>
</dbReference>
<dbReference type="CDD" id="cd18080">
    <property type="entry name" value="TrmD-like"/>
    <property type="match status" value="1"/>
</dbReference>
<dbReference type="FunFam" id="1.10.1270.20:FF:000001">
    <property type="entry name" value="tRNA (guanine-N(1)-)-methyltransferase"/>
    <property type="match status" value="1"/>
</dbReference>
<dbReference type="FunFam" id="3.40.1280.10:FF:000001">
    <property type="entry name" value="tRNA (guanine-N(1)-)-methyltransferase"/>
    <property type="match status" value="1"/>
</dbReference>
<dbReference type="Gene3D" id="3.40.1280.10">
    <property type="match status" value="1"/>
</dbReference>
<dbReference type="Gene3D" id="1.10.1270.20">
    <property type="entry name" value="tRNA(m1g37)methyltransferase, domain 2"/>
    <property type="match status" value="1"/>
</dbReference>
<dbReference type="HAMAP" id="MF_00605">
    <property type="entry name" value="TrmD"/>
    <property type="match status" value="1"/>
</dbReference>
<dbReference type="InterPro" id="IPR029028">
    <property type="entry name" value="Alpha/beta_knot_MTases"/>
</dbReference>
<dbReference type="InterPro" id="IPR023148">
    <property type="entry name" value="tRNA_m1G_MeTrfase_C_sf"/>
</dbReference>
<dbReference type="InterPro" id="IPR002649">
    <property type="entry name" value="tRNA_m1G_MeTrfase_TrmD"/>
</dbReference>
<dbReference type="InterPro" id="IPR029026">
    <property type="entry name" value="tRNA_m1G_MTases_N"/>
</dbReference>
<dbReference type="InterPro" id="IPR016009">
    <property type="entry name" value="tRNA_MeTrfase_TRMD/TRM10"/>
</dbReference>
<dbReference type="NCBIfam" id="NF000648">
    <property type="entry name" value="PRK00026.1"/>
    <property type="match status" value="1"/>
</dbReference>
<dbReference type="NCBIfam" id="TIGR00088">
    <property type="entry name" value="trmD"/>
    <property type="match status" value="1"/>
</dbReference>
<dbReference type="PANTHER" id="PTHR46417">
    <property type="entry name" value="TRNA (GUANINE-N(1)-)-METHYLTRANSFERASE"/>
    <property type="match status" value="1"/>
</dbReference>
<dbReference type="PANTHER" id="PTHR46417:SF1">
    <property type="entry name" value="TRNA (GUANINE-N(1)-)-METHYLTRANSFERASE"/>
    <property type="match status" value="1"/>
</dbReference>
<dbReference type="Pfam" id="PF01746">
    <property type="entry name" value="tRNA_m1G_MT"/>
    <property type="match status" value="1"/>
</dbReference>
<dbReference type="PIRSF" id="PIRSF000386">
    <property type="entry name" value="tRNA_mtase"/>
    <property type="match status" value="1"/>
</dbReference>
<dbReference type="SUPFAM" id="SSF75217">
    <property type="entry name" value="alpha/beta knot"/>
    <property type="match status" value="1"/>
</dbReference>
<gene>
    <name evidence="1" type="primary">trmD</name>
    <name type="ordered locus">Haur_2982</name>
</gene>
<name>TRMD_HERA2</name>
<organism>
    <name type="scientific">Herpetosiphon aurantiacus (strain ATCC 23779 / DSM 785 / 114-95)</name>
    <dbReference type="NCBI Taxonomy" id="316274"/>
    <lineage>
        <taxon>Bacteria</taxon>
        <taxon>Bacillati</taxon>
        <taxon>Chloroflexota</taxon>
        <taxon>Chloroflexia</taxon>
        <taxon>Herpetosiphonales</taxon>
        <taxon>Herpetosiphonaceae</taxon>
        <taxon>Herpetosiphon</taxon>
    </lineage>
</organism>